<accession>A7ZEZ5</accession>
<keyword id="KW-0067">ATP-binding</keyword>
<keyword id="KW-0963">Cytoplasm</keyword>
<keyword id="KW-0324">Glycolysis</keyword>
<keyword id="KW-0418">Kinase</keyword>
<keyword id="KW-0547">Nucleotide-binding</keyword>
<keyword id="KW-0808">Transferase</keyword>
<proteinExistence type="inferred from homology"/>
<comment type="catalytic activity">
    <reaction evidence="1">
        <text>(2R)-3-phosphoglycerate + ATP = (2R)-3-phospho-glyceroyl phosphate + ADP</text>
        <dbReference type="Rhea" id="RHEA:14801"/>
        <dbReference type="ChEBI" id="CHEBI:30616"/>
        <dbReference type="ChEBI" id="CHEBI:57604"/>
        <dbReference type="ChEBI" id="CHEBI:58272"/>
        <dbReference type="ChEBI" id="CHEBI:456216"/>
        <dbReference type="EC" id="2.7.2.3"/>
    </reaction>
</comment>
<comment type="pathway">
    <text evidence="1">Carbohydrate degradation; glycolysis; pyruvate from D-glyceraldehyde 3-phosphate: step 2/5.</text>
</comment>
<comment type="subunit">
    <text evidence="1">Monomer.</text>
</comment>
<comment type="subcellular location">
    <subcellularLocation>
        <location evidence="1">Cytoplasm</location>
    </subcellularLocation>
</comment>
<comment type="similarity">
    <text evidence="1">Belongs to the phosphoglycerate kinase family.</text>
</comment>
<evidence type="ECO:0000255" key="1">
    <source>
        <dbReference type="HAMAP-Rule" id="MF_00145"/>
    </source>
</evidence>
<dbReference type="EC" id="2.7.2.3" evidence="1"/>
<dbReference type="EMBL" id="CP000792">
    <property type="protein sequence ID" value="EAT99369.1"/>
    <property type="molecule type" value="Genomic_DNA"/>
</dbReference>
<dbReference type="RefSeq" id="WP_012140239.1">
    <property type="nucleotide sequence ID" value="NC_009802.2"/>
</dbReference>
<dbReference type="SMR" id="A7ZEZ5"/>
<dbReference type="STRING" id="360104.CCC13826_0515"/>
<dbReference type="KEGG" id="cco:CCC13826_0515"/>
<dbReference type="eggNOG" id="COG0126">
    <property type="taxonomic scope" value="Bacteria"/>
</dbReference>
<dbReference type="HOGENOM" id="CLU_025427_0_2_7"/>
<dbReference type="OrthoDB" id="9808460at2"/>
<dbReference type="UniPathway" id="UPA00109">
    <property type="reaction ID" value="UER00185"/>
</dbReference>
<dbReference type="Proteomes" id="UP000001121">
    <property type="component" value="Chromosome"/>
</dbReference>
<dbReference type="GO" id="GO:0005829">
    <property type="term" value="C:cytosol"/>
    <property type="evidence" value="ECO:0007669"/>
    <property type="project" value="TreeGrafter"/>
</dbReference>
<dbReference type="GO" id="GO:0043531">
    <property type="term" value="F:ADP binding"/>
    <property type="evidence" value="ECO:0007669"/>
    <property type="project" value="TreeGrafter"/>
</dbReference>
<dbReference type="GO" id="GO:0005524">
    <property type="term" value="F:ATP binding"/>
    <property type="evidence" value="ECO:0007669"/>
    <property type="project" value="UniProtKB-KW"/>
</dbReference>
<dbReference type="GO" id="GO:0004618">
    <property type="term" value="F:phosphoglycerate kinase activity"/>
    <property type="evidence" value="ECO:0007669"/>
    <property type="project" value="UniProtKB-UniRule"/>
</dbReference>
<dbReference type="GO" id="GO:0006094">
    <property type="term" value="P:gluconeogenesis"/>
    <property type="evidence" value="ECO:0007669"/>
    <property type="project" value="TreeGrafter"/>
</dbReference>
<dbReference type="GO" id="GO:0006096">
    <property type="term" value="P:glycolytic process"/>
    <property type="evidence" value="ECO:0007669"/>
    <property type="project" value="UniProtKB-UniRule"/>
</dbReference>
<dbReference type="CDD" id="cd00318">
    <property type="entry name" value="Phosphoglycerate_kinase"/>
    <property type="match status" value="1"/>
</dbReference>
<dbReference type="FunFam" id="3.40.50.1260:FF:000003">
    <property type="entry name" value="Phosphoglycerate kinase"/>
    <property type="match status" value="1"/>
</dbReference>
<dbReference type="FunFam" id="3.40.50.1260:FF:000006">
    <property type="entry name" value="Phosphoglycerate kinase"/>
    <property type="match status" value="1"/>
</dbReference>
<dbReference type="Gene3D" id="3.40.50.1260">
    <property type="entry name" value="Phosphoglycerate kinase, N-terminal domain"/>
    <property type="match status" value="2"/>
</dbReference>
<dbReference type="HAMAP" id="MF_00145">
    <property type="entry name" value="Phosphoglyc_kinase"/>
    <property type="match status" value="1"/>
</dbReference>
<dbReference type="InterPro" id="IPR001576">
    <property type="entry name" value="Phosphoglycerate_kinase"/>
</dbReference>
<dbReference type="InterPro" id="IPR015911">
    <property type="entry name" value="Phosphoglycerate_kinase_CS"/>
</dbReference>
<dbReference type="InterPro" id="IPR015824">
    <property type="entry name" value="Phosphoglycerate_kinase_N"/>
</dbReference>
<dbReference type="InterPro" id="IPR036043">
    <property type="entry name" value="Phosphoglycerate_kinase_sf"/>
</dbReference>
<dbReference type="PANTHER" id="PTHR11406">
    <property type="entry name" value="PHOSPHOGLYCERATE KINASE"/>
    <property type="match status" value="1"/>
</dbReference>
<dbReference type="PANTHER" id="PTHR11406:SF23">
    <property type="entry name" value="PHOSPHOGLYCERATE KINASE 1, CHLOROPLASTIC-RELATED"/>
    <property type="match status" value="1"/>
</dbReference>
<dbReference type="Pfam" id="PF00162">
    <property type="entry name" value="PGK"/>
    <property type="match status" value="1"/>
</dbReference>
<dbReference type="PIRSF" id="PIRSF000724">
    <property type="entry name" value="Pgk"/>
    <property type="match status" value="1"/>
</dbReference>
<dbReference type="PRINTS" id="PR00477">
    <property type="entry name" value="PHGLYCKINASE"/>
</dbReference>
<dbReference type="SUPFAM" id="SSF53748">
    <property type="entry name" value="Phosphoglycerate kinase"/>
    <property type="match status" value="1"/>
</dbReference>
<dbReference type="PROSITE" id="PS00111">
    <property type="entry name" value="PGLYCERATE_KINASE"/>
    <property type="match status" value="1"/>
</dbReference>
<feature type="chain" id="PRO_1000203321" description="Phosphoglycerate kinase">
    <location>
        <begin position="1"/>
        <end position="399"/>
    </location>
</feature>
<feature type="binding site" evidence="1">
    <location>
        <begin position="22"/>
        <end position="24"/>
    </location>
    <ligand>
        <name>substrate</name>
    </ligand>
</feature>
<feature type="binding site" evidence="1">
    <location>
        <position position="38"/>
    </location>
    <ligand>
        <name>substrate</name>
    </ligand>
</feature>
<feature type="binding site" evidence="1">
    <location>
        <begin position="61"/>
        <end position="64"/>
    </location>
    <ligand>
        <name>substrate</name>
    </ligand>
</feature>
<feature type="binding site" evidence="1">
    <location>
        <position position="120"/>
    </location>
    <ligand>
        <name>substrate</name>
    </ligand>
</feature>
<feature type="binding site" evidence="1">
    <location>
        <position position="153"/>
    </location>
    <ligand>
        <name>substrate</name>
    </ligand>
</feature>
<feature type="binding site" evidence="1">
    <location>
        <position position="206"/>
    </location>
    <ligand>
        <name>ATP</name>
        <dbReference type="ChEBI" id="CHEBI:30616"/>
    </ligand>
</feature>
<feature type="binding site" evidence="1">
    <location>
        <position position="297"/>
    </location>
    <ligand>
        <name>ATP</name>
        <dbReference type="ChEBI" id="CHEBI:30616"/>
    </ligand>
</feature>
<feature type="binding site" evidence="1">
    <location>
        <position position="328"/>
    </location>
    <ligand>
        <name>ATP</name>
        <dbReference type="ChEBI" id="CHEBI:30616"/>
    </ligand>
</feature>
<feature type="binding site" evidence="1">
    <location>
        <begin position="354"/>
        <end position="357"/>
    </location>
    <ligand>
        <name>ATP</name>
        <dbReference type="ChEBI" id="CHEBI:30616"/>
    </ligand>
</feature>
<protein>
    <recommendedName>
        <fullName evidence="1">Phosphoglycerate kinase</fullName>
        <ecNumber evidence="1">2.7.2.3</ecNumber>
    </recommendedName>
</protein>
<name>PGK_CAMC1</name>
<gene>
    <name evidence="1" type="primary">pgk</name>
    <name type="ordered locus">Ccon26_15050</name>
    <name type="ORF">CCC13826_0515</name>
</gene>
<sequence length="399" mass="43785">MSDILSINDLELNGAKVFIRCDFNVPMDEFLNITDDRRIRSAIPTIRYCLDNGCSVVLASHLGRPKNGYEEKFSLQGVAKRLSRLLDREVIFAEDVIGNDAKTKAEALKAGEILMIENLRFEKGETKNDEALAKELSEFGEFYINDAFGVCHRAHSSVEAITKFYDEKHKAAGFLLQKEINFAQNLIKHPSRPFVAVVGGSKVSGKLQALHNLLPRVDKLIIGGGMAFTFLKSLGENIGNSLLEEELIEDARQILQKGKELGVKIYLPVDVVAAQTFSAESAVKYVPAQEIPNGWMGLDIGPASIRLFKEVIADAQTIWWNGPMGVFEMDKFSKGSIKMSHAIIDTHATTVVGGGDTADVVERAGDADEMTFISTGGGASLELIEGKELPGIKPLRKEE</sequence>
<reference key="1">
    <citation type="submission" date="2007-10" db="EMBL/GenBank/DDBJ databases">
        <title>Genome sequence of Campylobacter concisus 13826 isolated from human feces.</title>
        <authorList>
            <person name="Fouts D.E."/>
            <person name="Mongodin E.F."/>
            <person name="Puiu D."/>
            <person name="Sebastian Y."/>
            <person name="Miller W.G."/>
            <person name="Mandrell R.E."/>
            <person name="On S."/>
            <person name="Nelson K.E."/>
        </authorList>
    </citation>
    <scope>NUCLEOTIDE SEQUENCE [LARGE SCALE GENOMIC DNA]</scope>
    <source>
        <strain>13826</strain>
    </source>
</reference>
<organism>
    <name type="scientific">Campylobacter concisus (strain 13826)</name>
    <dbReference type="NCBI Taxonomy" id="360104"/>
    <lineage>
        <taxon>Bacteria</taxon>
        <taxon>Pseudomonadati</taxon>
        <taxon>Campylobacterota</taxon>
        <taxon>Epsilonproteobacteria</taxon>
        <taxon>Campylobacterales</taxon>
        <taxon>Campylobacteraceae</taxon>
        <taxon>Campylobacter</taxon>
    </lineage>
</organism>